<proteinExistence type="inferred from homology"/>
<comment type="function">
    <text evidence="1">F(1)F(0) ATP synthase produces ATP from ADP in the presence of a proton or sodium gradient. F-type ATPases consist of two structural domains, F(1) containing the extramembraneous catalytic core and F(0) containing the membrane proton channel, linked together by a central stalk and a peripheral stalk. During catalysis, ATP synthesis in the catalytic domain of F(1) is coupled via a rotary mechanism of the central stalk subunits to proton translocation.</text>
</comment>
<comment type="function">
    <text evidence="1">This protein is part of the stalk that links CF(0) to CF(1). It either transmits conformational changes from CF(0) to CF(1) or is implicated in proton conduction.</text>
</comment>
<comment type="subunit">
    <text evidence="1">F-type ATPases have 2 components, F(1) - the catalytic core - and F(0) - the membrane proton channel. F(1) has five subunits: alpha(3), beta(3), gamma(1), delta(1), epsilon(1). CF(0) has four main subunits: a(1), b(1), b'(1) and c(10-14). The alpha and beta chains form an alternating ring which encloses part of the gamma chain. F(1) is attached to F(0) by a central stalk formed by the gamma and epsilon chains, while a peripheral stalk is formed by the delta, b and b' chains.</text>
</comment>
<comment type="subcellular location">
    <subcellularLocation>
        <location evidence="1">Cellular thylakoid membrane</location>
        <topology evidence="1">Peripheral membrane protein</topology>
    </subcellularLocation>
</comment>
<comment type="similarity">
    <text evidence="1">Belongs to the ATPase delta chain family.</text>
</comment>
<organism>
    <name type="scientific">Prochlorococcus marinus (strain MIT 9215)</name>
    <dbReference type="NCBI Taxonomy" id="93060"/>
    <lineage>
        <taxon>Bacteria</taxon>
        <taxon>Bacillati</taxon>
        <taxon>Cyanobacteriota</taxon>
        <taxon>Cyanophyceae</taxon>
        <taxon>Synechococcales</taxon>
        <taxon>Prochlorococcaceae</taxon>
        <taxon>Prochlorococcus</taxon>
    </lineage>
</organism>
<protein>
    <recommendedName>
        <fullName evidence="1">ATP synthase subunit delta</fullName>
    </recommendedName>
    <alternativeName>
        <fullName evidence="1">ATP synthase F(1) sector subunit delta</fullName>
    </alternativeName>
    <alternativeName>
        <fullName evidence="1">F-type ATPase subunit delta</fullName>
        <shortName evidence="1">F-ATPase subunit delta</shortName>
    </alternativeName>
</protein>
<keyword id="KW-0066">ATP synthesis</keyword>
<keyword id="KW-0139">CF(1)</keyword>
<keyword id="KW-0375">Hydrogen ion transport</keyword>
<keyword id="KW-0406">Ion transport</keyword>
<keyword id="KW-0472">Membrane</keyword>
<keyword id="KW-0793">Thylakoid</keyword>
<keyword id="KW-0813">Transport</keyword>
<sequence>MPLLNSVTTPYAEALLQVVNENLQTEEMVSEVKQLLELINDSPELEKALSSPILETDAKKKIIIEIFSNKVNSSLMNFLKLLADRQRIGILTSILERFLEIYRENSNIALATVTSAVELTDEQKGLITQKIINIAGTEKLELVTKIDPSLIGGFVASVGSKVIDASLASQIRKLGLSLSK</sequence>
<dbReference type="EMBL" id="CP000825">
    <property type="protein sequence ID" value="ABV51333.1"/>
    <property type="molecule type" value="Genomic_DNA"/>
</dbReference>
<dbReference type="RefSeq" id="WP_012008354.1">
    <property type="nucleotide sequence ID" value="NC_009840.1"/>
</dbReference>
<dbReference type="SMR" id="A8G6V2"/>
<dbReference type="STRING" id="93060.P9215_17201"/>
<dbReference type="KEGG" id="pmh:P9215_17201"/>
<dbReference type="eggNOG" id="COG0712">
    <property type="taxonomic scope" value="Bacteria"/>
</dbReference>
<dbReference type="HOGENOM" id="CLU_085114_1_1_3"/>
<dbReference type="OrthoDB" id="9802471at2"/>
<dbReference type="Proteomes" id="UP000002014">
    <property type="component" value="Chromosome"/>
</dbReference>
<dbReference type="GO" id="GO:0031676">
    <property type="term" value="C:plasma membrane-derived thylakoid membrane"/>
    <property type="evidence" value="ECO:0007669"/>
    <property type="project" value="UniProtKB-SubCell"/>
</dbReference>
<dbReference type="GO" id="GO:0045259">
    <property type="term" value="C:proton-transporting ATP synthase complex"/>
    <property type="evidence" value="ECO:0007669"/>
    <property type="project" value="UniProtKB-KW"/>
</dbReference>
<dbReference type="GO" id="GO:0046933">
    <property type="term" value="F:proton-transporting ATP synthase activity, rotational mechanism"/>
    <property type="evidence" value="ECO:0007669"/>
    <property type="project" value="UniProtKB-UniRule"/>
</dbReference>
<dbReference type="Gene3D" id="1.10.520.20">
    <property type="entry name" value="N-terminal domain of the delta subunit of the F1F0-ATP synthase"/>
    <property type="match status" value="1"/>
</dbReference>
<dbReference type="HAMAP" id="MF_01416">
    <property type="entry name" value="ATP_synth_delta_bact"/>
    <property type="match status" value="1"/>
</dbReference>
<dbReference type="InterPro" id="IPR026015">
    <property type="entry name" value="ATP_synth_OSCP/delta_N_sf"/>
</dbReference>
<dbReference type="InterPro" id="IPR000711">
    <property type="entry name" value="ATPase_OSCP/dsu"/>
</dbReference>
<dbReference type="NCBIfam" id="TIGR01145">
    <property type="entry name" value="ATP_synt_delta"/>
    <property type="match status" value="1"/>
</dbReference>
<dbReference type="PANTHER" id="PTHR11910">
    <property type="entry name" value="ATP SYNTHASE DELTA CHAIN"/>
    <property type="match status" value="1"/>
</dbReference>
<dbReference type="Pfam" id="PF00213">
    <property type="entry name" value="OSCP"/>
    <property type="match status" value="1"/>
</dbReference>
<dbReference type="PRINTS" id="PR00125">
    <property type="entry name" value="ATPASEDELTA"/>
</dbReference>
<dbReference type="SUPFAM" id="SSF47928">
    <property type="entry name" value="N-terminal domain of the delta subunit of the F1F0-ATP synthase"/>
    <property type="match status" value="1"/>
</dbReference>
<feature type="chain" id="PRO_0000371062" description="ATP synthase subunit delta">
    <location>
        <begin position="1"/>
        <end position="180"/>
    </location>
</feature>
<evidence type="ECO:0000255" key="1">
    <source>
        <dbReference type="HAMAP-Rule" id="MF_01416"/>
    </source>
</evidence>
<accession>A8G6V2</accession>
<reference key="1">
    <citation type="journal article" date="2007" name="PLoS Genet.">
        <title>Patterns and implications of gene gain and loss in the evolution of Prochlorococcus.</title>
        <authorList>
            <person name="Kettler G.C."/>
            <person name="Martiny A.C."/>
            <person name="Huang K."/>
            <person name="Zucker J."/>
            <person name="Coleman M.L."/>
            <person name="Rodrigue S."/>
            <person name="Chen F."/>
            <person name="Lapidus A."/>
            <person name="Ferriera S."/>
            <person name="Johnson J."/>
            <person name="Steglich C."/>
            <person name="Church G.M."/>
            <person name="Richardson P."/>
            <person name="Chisholm S.W."/>
        </authorList>
    </citation>
    <scope>NUCLEOTIDE SEQUENCE [LARGE SCALE GENOMIC DNA]</scope>
    <source>
        <strain>MIT 9215</strain>
    </source>
</reference>
<gene>
    <name evidence="1" type="primary">atpH</name>
    <name evidence="1" type="synonym">atpD</name>
    <name type="ordered locus">P9215_17201</name>
</gene>
<name>ATPD_PROM2</name>